<gene>
    <name evidence="1" type="primary">thiE</name>
    <name type="ordered locus">SEN3949</name>
</gene>
<comment type="function">
    <text evidence="1">Condenses 4-methyl-5-(beta-hydroxyethyl)thiazole monophosphate (THZ-P) and 2-methyl-4-amino-5-hydroxymethyl pyrimidine pyrophosphate (HMP-PP) to form thiamine monophosphate (TMP).</text>
</comment>
<comment type="catalytic activity">
    <reaction evidence="1">
        <text>2-[(2R,5Z)-2-carboxy-4-methylthiazol-5(2H)-ylidene]ethyl phosphate + 4-amino-2-methyl-5-(diphosphooxymethyl)pyrimidine + 2 H(+) = thiamine phosphate + CO2 + diphosphate</text>
        <dbReference type="Rhea" id="RHEA:47844"/>
        <dbReference type="ChEBI" id="CHEBI:15378"/>
        <dbReference type="ChEBI" id="CHEBI:16526"/>
        <dbReference type="ChEBI" id="CHEBI:33019"/>
        <dbReference type="ChEBI" id="CHEBI:37575"/>
        <dbReference type="ChEBI" id="CHEBI:57841"/>
        <dbReference type="ChEBI" id="CHEBI:62899"/>
        <dbReference type="EC" id="2.5.1.3"/>
    </reaction>
</comment>
<comment type="catalytic activity">
    <reaction evidence="1">
        <text>2-(2-carboxy-4-methylthiazol-5-yl)ethyl phosphate + 4-amino-2-methyl-5-(diphosphooxymethyl)pyrimidine + 2 H(+) = thiamine phosphate + CO2 + diphosphate</text>
        <dbReference type="Rhea" id="RHEA:47848"/>
        <dbReference type="ChEBI" id="CHEBI:15378"/>
        <dbReference type="ChEBI" id="CHEBI:16526"/>
        <dbReference type="ChEBI" id="CHEBI:33019"/>
        <dbReference type="ChEBI" id="CHEBI:37575"/>
        <dbReference type="ChEBI" id="CHEBI:57841"/>
        <dbReference type="ChEBI" id="CHEBI:62890"/>
        <dbReference type="EC" id="2.5.1.3"/>
    </reaction>
</comment>
<comment type="catalytic activity">
    <reaction evidence="1">
        <text>4-methyl-5-(2-phosphooxyethyl)-thiazole + 4-amino-2-methyl-5-(diphosphooxymethyl)pyrimidine + H(+) = thiamine phosphate + diphosphate</text>
        <dbReference type="Rhea" id="RHEA:22328"/>
        <dbReference type="ChEBI" id="CHEBI:15378"/>
        <dbReference type="ChEBI" id="CHEBI:33019"/>
        <dbReference type="ChEBI" id="CHEBI:37575"/>
        <dbReference type="ChEBI" id="CHEBI:57841"/>
        <dbReference type="ChEBI" id="CHEBI:58296"/>
        <dbReference type="EC" id="2.5.1.3"/>
    </reaction>
</comment>
<comment type="cofactor">
    <cofactor evidence="1">
        <name>Mg(2+)</name>
        <dbReference type="ChEBI" id="CHEBI:18420"/>
    </cofactor>
    <text evidence="1">Binds 1 Mg(2+) ion per subunit.</text>
</comment>
<comment type="pathway">
    <text evidence="1">Cofactor biosynthesis; thiamine diphosphate biosynthesis; thiamine phosphate from 4-amino-2-methyl-5-diphosphomethylpyrimidine and 4-methyl-5-(2-phosphoethyl)-thiazole: step 1/1.</text>
</comment>
<comment type="similarity">
    <text evidence="1">Belongs to the thiamine-phosphate synthase family.</text>
</comment>
<sequence length="211" mass="22898">MYQPDFPTVPFRLGLYPVVDSVAWIERLLEAGVRTIQLRIKDKRDEEVEADVIAAIALGRRYNARLFINDYWRLAIKHRAYGVHLGQEDLETTDLKAIQAAGLRLGVSTHDDMEIDVALAAKPSYIALGHVFPTQTKQMPSAPQGLAQLASHIERLADYPTVAIGGISLERATAVLATGVGSIAVVSAITQAADWRAATAQLLDIAGVGDE</sequence>
<name>THIE_SALEP</name>
<proteinExistence type="inferred from homology"/>
<protein>
    <recommendedName>
        <fullName evidence="1">Thiamine-phosphate synthase</fullName>
        <shortName evidence="1">TP synthase</shortName>
        <shortName evidence="1">TPS</shortName>
        <ecNumber evidence="1">2.5.1.3</ecNumber>
    </recommendedName>
    <alternativeName>
        <fullName evidence="1">Thiamine-phosphate pyrophosphorylase</fullName>
        <shortName evidence="1">TMP pyrophosphorylase</shortName>
        <shortName evidence="1">TMP-PPase</shortName>
    </alternativeName>
</protein>
<feature type="chain" id="PRO_1000093685" description="Thiamine-phosphate synthase">
    <location>
        <begin position="1"/>
        <end position="211"/>
    </location>
</feature>
<feature type="binding site" evidence="1">
    <location>
        <begin position="37"/>
        <end position="41"/>
    </location>
    <ligand>
        <name>4-amino-2-methyl-5-(diphosphooxymethyl)pyrimidine</name>
        <dbReference type="ChEBI" id="CHEBI:57841"/>
    </ligand>
</feature>
<feature type="binding site" evidence="1">
    <location>
        <position position="69"/>
    </location>
    <ligand>
        <name>4-amino-2-methyl-5-(diphosphooxymethyl)pyrimidine</name>
        <dbReference type="ChEBI" id="CHEBI:57841"/>
    </ligand>
</feature>
<feature type="binding site" evidence="1">
    <location>
        <position position="70"/>
    </location>
    <ligand>
        <name>Mg(2+)</name>
        <dbReference type="ChEBI" id="CHEBI:18420"/>
    </ligand>
</feature>
<feature type="binding site" evidence="1">
    <location>
        <position position="89"/>
    </location>
    <ligand>
        <name>Mg(2+)</name>
        <dbReference type="ChEBI" id="CHEBI:18420"/>
    </ligand>
</feature>
<feature type="binding site" evidence="1">
    <location>
        <position position="108"/>
    </location>
    <ligand>
        <name>4-amino-2-methyl-5-(diphosphooxymethyl)pyrimidine</name>
        <dbReference type="ChEBI" id="CHEBI:57841"/>
    </ligand>
</feature>
<feature type="binding site" evidence="1">
    <location>
        <begin position="134"/>
        <end position="136"/>
    </location>
    <ligand>
        <name>2-[(2R,5Z)-2-carboxy-4-methylthiazol-5(2H)-ylidene]ethyl phosphate</name>
        <dbReference type="ChEBI" id="CHEBI:62899"/>
    </ligand>
</feature>
<feature type="binding site" evidence="1">
    <location>
        <position position="137"/>
    </location>
    <ligand>
        <name>4-amino-2-methyl-5-(diphosphooxymethyl)pyrimidine</name>
        <dbReference type="ChEBI" id="CHEBI:57841"/>
    </ligand>
</feature>
<feature type="binding site" evidence="1">
    <location>
        <position position="166"/>
    </location>
    <ligand>
        <name>2-[(2R,5Z)-2-carboxy-4-methylthiazol-5(2H)-ylidene]ethyl phosphate</name>
        <dbReference type="ChEBI" id="CHEBI:62899"/>
    </ligand>
</feature>
<feature type="binding site" evidence="1">
    <location>
        <begin position="186"/>
        <end position="187"/>
    </location>
    <ligand>
        <name>2-[(2R,5Z)-2-carboxy-4-methylthiazol-5(2H)-ylidene]ethyl phosphate</name>
        <dbReference type="ChEBI" id="CHEBI:62899"/>
    </ligand>
</feature>
<keyword id="KW-0460">Magnesium</keyword>
<keyword id="KW-0479">Metal-binding</keyword>
<keyword id="KW-0784">Thiamine biosynthesis</keyword>
<keyword id="KW-0808">Transferase</keyword>
<dbReference type="EC" id="2.5.1.3" evidence="1"/>
<dbReference type="EMBL" id="AM933172">
    <property type="protein sequence ID" value="CAR35518.1"/>
    <property type="molecule type" value="Genomic_DNA"/>
</dbReference>
<dbReference type="RefSeq" id="WP_000284639.1">
    <property type="nucleotide sequence ID" value="NC_011294.1"/>
</dbReference>
<dbReference type="SMR" id="B5QYE8"/>
<dbReference type="KEGG" id="set:SEN3949"/>
<dbReference type="HOGENOM" id="CLU_018272_3_3_6"/>
<dbReference type="UniPathway" id="UPA00060">
    <property type="reaction ID" value="UER00141"/>
</dbReference>
<dbReference type="Proteomes" id="UP000000613">
    <property type="component" value="Chromosome"/>
</dbReference>
<dbReference type="GO" id="GO:0005737">
    <property type="term" value="C:cytoplasm"/>
    <property type="evidence" value="ECO:0007669"/>
    <property type="project" value="TreeGrafter"/>
</dbReference>
<dbReference type="GO" id="GO:0000287">
    <property type="term" value="F:magnesium ion binding"/>
    <property type="evidence" value="ECO:0007669"/>
    <property type="project" value="UniProtKB-UniRule"/>
</dbReference>
<dbReference type="GO" id="GO:0004789">
    <property type="term" value="F:thiamine-phosphate diphosphorylase activity"/>
    <property type="evidence" value="ECO:0007669"/>
    <property type="project" value="UniProtKB-UniRule"/>
</dbReference>
<dbReference type="GO" id="GO:0009228">
    <property type="term" value="P:thiamine biosynthetic process"/>
    <property type="evidence" value="ECO:0007669"/>
    <property type="project" value="UniProtKB-KW"/>
</dbReference>
<dbReference type="GO" id="GO:0009229">
    <property type="term" value="P:thiamine diphosphate biosynthetic process"/>
    <property type="evidence" value="ECO:0007669"/>
    <property type="project" value="UniProtKB-UniRule"/>
</dbReference>
<dbReference type="CDD" id="cd00564">
    <property type="entry name" value="TMP_TenI"/>
    <property type="match status" value="1"/>
</dbReference>
<dbReference type="FunFam" id="3.20.20.70:FF:000064">
    <property type="entry name" value="Thiamine-phosphate synthase"/>
    <property type="match status" value="1"/>
</dbReference>
<dbReference type="Gene3D" id="3.20.20.70">
    <property type="entry name" value="Aldolase class I"/>
    <property type="match status" value="1"/>
</dbReference>
<dbReference type="HAMAP" id="MF_00097">
    <property type="entry name" value="TMP_synthase"/>
    <property type="match status" value="1"/>
</dbReference>
<dbReference type="InterPro" id="IPR013785">
    <property type="entry name" value="Aldolase_TIM"/>
</dbReference>
<dbReference type="InterPro" id="IPR036206">
    <property type="entry name" value="ThiamineP_synth_sf"/>
</dbReference>
<dbReference type="InterPro" id="IPR022998">
    <property type="entry name" value="ThiamineP_synth_TenI"/>
</dbReference>
<dbReference type="InterPro" id="IPR034291">
    <property type="entry name" value="TMP_synthase"/>
</dbReference>
<dbReference type="NCBIfam" id="NF002904">
    <property type="entry name" value="PRK03512.1"/>
    <property type="match status" value="1"/>
</dbReference>
<dbReference type="NCBIfam" id="TIGR00693">
    <property type="entry name" value="thiE"/>
    <property type="match status" value="1"/>
</dbReference>
<dbReference type="PANTHER" id="PTHR20857">
    <property type="entry name" value="THIAMINE-PHOSPHATE PYROPHOSPHORYLASE"/>
    <property type="match status" value="1"/>
</dbReference>
<dbReference type="PANTHER" id="PTHR20857:SF15">
    <property type="entry name" value="THIAMINE-PHOSPHATE SYNTHASE"/>
    <property type="match status" value="1"/>
</dbReference>
<dbReference type="Pfam" id="PF02581">
    <property type="entry name" value="TMP-TENI"/>
    <property type="match status" value="1"/>
</dbReference>
<dbReference type="SUPFAM" id="SSF51391">
    <property type="entry name" value="Thiamin phosphate synthase"/>
    <property type="match status" value="1"/>
</dbReference>
<evidence type="ECO:0000255" key="1">
    <source>
        <dbReference type="HAMAP-Rule" id="MF_00097"/>
    </source>
</evidence>
<organism>
    <name type="scientific">Salmonella enteritidis PT4 (strain P125109)</name>
    <dbReference type="NCBI Taxonomy" id="550537"/>
    <lineage>
        <taxon>Bacteria</taxon>
        <taxon>Pseudomonadati</taxon>
        <taxon>Pseudomonadota</taxon>
        <taxon>Gammaproteobacteria</taxon>
        <taxon>Enterobacterales</taxon>
        <taxon>Enterobacteriaceae</taxon>
        <taxon>Salmonella</taxon>
    </lineage>
</organism>
<accession>B5QYE8</accession>
<reference key="1">
    <citation type="journal article" date="2008" name="Genome Res.">
        <title>Comparative genome analysis of Salmonella enteritidis PT4 and Salmonella gallinarum 287/91 provides insights into evolutionary and host adaptation pathways.</title>
        <authorList>
            <person name="Thomson N.R."/>
            <person name="Clayton D.J."/>
            <person name="Windhorst D."/>
            <person name="Vernikos G."/>
            <person name="Davidson S."/>
            <person name="Churcher C."/>
            <person name="Quail M.A."/>
            <person name="Stevens M."/>
            <person name="Jones M.A."/>
            <person name="Watson M."/>
            <person name="Barron A."/>
            <person name="Layton A."/>
            <person name="Pickard D."/>
            <person name="Kingsley R.A."/>
            <person name="Bignell A."/>
            <person name="Clark L."/>
            <person name="Harris B."/>
            <person name="Ormond D."/>
            <person name="Abdellah Z."/>
            <person name="Brooks K."/>
            <person name="Cherevach I."/>
            <person name="Chillingworth T."/>
            <person name="Woodward J."/>
            <person name="Norberczak H."/>
            <person name="Lord A."/>
            <person name="Arrowsmith C."/>
            <person name="Jagels K."/>
            <person name="Moule S."/>
            <person name="Mungall K."/>
            <person name="Saunders M."/>
            <person name="Whitehead S."/>
            <person name="Chabalgoity J.A."/>
            <person name="Maskell D."/>
            <person name="Humphreys T."/>
            <person name="Roberts M."/>
            <person name="Barrow P.A."/>
            <person name="Dougan G."/>
            <person name="Parkhill J."/>
        </authorList>
    </citation>
    <scope>NUCLEOTIDE SEQUENCE [LARGE SCALE GENOMIC DNA]</scope>
    <source>
        <strain>P125109</strain>
    </source>
</reference>